<organism>
    <name type="scientific">Acidianus filamentous virus 2 (isolate Italy/Pozzuoli)</name>
    <name type="common">AFV-2</name>
    <dbReference type="NCBI Taxonomy" id="654910"/>
    <lineage>
        <taxon>Viruses</taxon>
        <taxon>Adnaviria</taxon>
        <taxon>Zilligvirae</taxon>
        <taxon>Taleaviricota</taxon>
        <taxon>Tokiviricetes</taxon>
        <taxon>Ligamenvirales</taxon>
        <taxon>Lipothrixviridae</taxon>
        <taxon>Deltalipothrixvirus</taxon>
        <taxon>Acidianus filamentous virus 2</taxon>
    </lineage>
</organism>
<accession>Q573C5</accession>
<reference key="1">
    <citation type="journal article" date="2005" name="J. Bacteriol.">
        <title>Structure and genome organization of AFV2, a novel archaeal lipothrixvirus with unusual terminal and core structures.</title>
        <authorList>
            <person name="Haring M."/>
            <person name="Vestergaard G."/>
            <person name="Brugger K."/>
            <person name="Rachel R."/>
            <person name="Garrett R.A."/>
            <person name="Prangishvili D."/>
        </authorList>
    </citation>
    <scope>NUCLEOTIDE SEQUENCE [GENOMIC DNA]</scope>
</reference>
<organismHost>
    <name type="scientific">Acidianus sp. F28</name>
    <dbReference type="NCBI Taxonomy" id="315458"/>
</organismHost>
<protein>
    <recommendedName>
        <fullName>Uncharacterized protein ORF254</fullName>
    </recommendedName>
</protein>
<dbReference type="EMBL" id="AJ854042">
    <property type="protein sequence ID" value="CAH69431.1"/>
    <property type="molecule type" value="Genomic_DNA"/>
</dbReference>
<dbReference type="RefSeq" id="YP_001496969.1">
    <property type="nucleotide sequence ID" value="NC_009884.1"/>
</dbReference>
<dbReference type="KEGG" id="vg:5656088"/>
<dbReference type="Proteomes" id="UP000006364">
    <property type="component" value="Genome"/>
</dbReference>
<name>Y254_AFV2P</name>
<gene>
    <name type="ORF">ORF254</name>
</gene>
<proteinExistence type="predicted"/>
<feature type="chain" id="PRO_0000384523" description="Uncharacterized protein ORF254">
    <location>
        <begin position="1"/>
        <end position="254"/>
    </location>
</feature>
<sequence length="254" mass="28485">MKRQYILHVKPNIHARISSIHQSSGGVFEVEDVNNVQYNVNDNELSVKGNYIGGEYGEMIWNIINTTNVTQYVALVRGATIKLQDSSSSQEVTIPDYLFGRAFAEVYFNLGISQFGDDATAFETPYTLAVYNGDTIGFVFAVKPYTVIHVPEYGFTNLVSYTARLLPVKLGGINTYIDFYDYSEVVQYQSQTGYNINYMPDPIVFSSIQVKADANLLGYGFHERLLLPIPTQWLNIANDVATALEKLKSLSKLL</sequence>
<keyword id="KW-1185">Reference proteome</keyword>